<organism>
    <name type="scientific">Oryza sativa subsp. japonica</name>
    <name type="common">Rice</name>
    <dbReference type="NCBI Taxonomy" id="39947"/>
    <lineage>
        <taxon>Eukaryota</taxon>
        <taxon>Viridiplantae</taxon>
        <taxon>Streptophyta</taxon>
        <taxon>Embryophyta</taxon>
        <taxon>Tracheophyta</taxon>
        <taxon>Spermatophyta</taxon>
        <taxon>Magnoliopsida</taxon>
        <taxon>Liliopsida</taxon>
        <taxon>Poales</taxon>
        <taxon>Poaceae</taxon>
        <taxon>BOP clade</taxon>
        <taxon>Oryzoideae</taxon>
        <taxon>Oryzeae</taxon>
        <taxon>Oryzinae</taxon>
        <taxon>Oryza</taxon>
        <taxon>Oryza sativa</taxon>
    </lineage>
</organism>
<proteinExistence type="evidence at transcript level"/>
<dbReference type="EMBL" id="AP003350">
    <property type="protein sequence ID" value="BAD87472.1"/>
    <property type="status" value="ALT_INIT"/>
    <property type="molecule type" value="Genomic_DNA"/>
</dbReference>
<dbReference type="EMBL" id="AP008207">
    <property type="protein sequence ID" value="BAF05152.1"/>
    <property type="molecule type" value="Genomic_DNA"/>
</dbReference>
<dbReference type="EMBL" id="AP014957">
    <property type="protein sequence ID" value="BAS72505.1"/>
    <property type="molecule type" value="Genomic_DNA"/>
</dbReference>
<dbReference type="EMBL" id="AK103724">
    <property type="protein sequence ID" value="BAG96229.1"/>
    <property type="molecule type" value="mRNA"/>
</dbReference>
<dbReference type="EMBL" id="AK106476">
    <property type="protein sequence ID" value="BAG97733.1"/>
    <property type="molecule type" value="mRNA"/>
</dbReference>
<dbReference type="RefSeq" id="XP_015622033.1">
    <property type="nucleotide sequence ID" value="XM_015766547.1"/>
</dbReference>
<dbReference type="RefSeq" id="XP_015622046.1">
    <property type="nucleotide sequence ID" value="XM_015766560.1"/>
</dbReference>
<dbReference type="SMR" id="Q0JM76"/>
<dbReference type="FunCoup" id="Q0JM76">
    <property type="interactions" value="1068"/>
</dbReference>
<dbReference type="STRING" id="39947.Q0JM76"/>
<dbReference type="PaxDb" id="39947-Q0JM76"/>
<dbReference type="EnsemblPlants" id="Os01t0530400-01">
    <property type="protein sequence ID" value="Os01t0530400-01"/>
    <property type="gene ID" value="Os01g0530400"/>
</dbReference>
<dbReference type="EnsemblPlants" id="Os01t0530400-03">
    <property type="protein sequence ID" value="Os01t0530400-03"/>
    <property type="gene ID" value="Os01g0530400"/>
</dbReference>
<dbReference type="Gramene" id="Os01t0530400-01">
    <property type="protein sequence ID" value="Os01t0530400-01"/>
    <property type="gene ID" value="Os01g0530400"/>
</dbReference>
<dbReference type="Gramene" id="Os01t0530400-03">
    <property type="protein sequence ID" value="Os01t0530400-03"/>
    <property type="gene ID" value="Os01g0530400"/>
</dbReference>
<dbReference type="KEGG" id="dosa:Os01g0530400"/>
<dbReference type="eggNOG" id="KOG0911">
    <property type="taxonomic scope" value="Eukaryota"/>
</dbReference>
<dbReference type="InParanoid" id="Q0JM76"/>
<dbReference type="OMA" id="TIHQFRN"/>
<dbReference type="OrthoDB" id="415696at2759"/>
<dbReference type="Proteomes" id="UP000000763">
    <property type="component" value="Chromosome 1"/>
</dbReference>
<dbReference type="Proteomes" id="UP000059680">
    <property type="component" value="Chromosome 1"/>
</dbReference>
<dbReference type="ExpressionAtlas" id="Q0JM76">
    <property type="expression patterns" value="baseline and differential"/>
</dbReference>
<dbReference type="GO" id="GO:0005759">
    <property type="term" value="C:mitochondrial matrix"/>
    <property type="evidence" value="ECO:0000318"/>
    <property type="project" value="GO_Central"/>
</dbReference>
<dbReference type="GO" id="GO:0051537">
    <property type="term" value="F:2 iron, 2 sulfur cluster binding"/>
    <property type="evidence" value="ECO:0007669"/>
    <property type="project" value="UniProtKB-KW"/>
</dbReference>
<dbReference type="GO" id="GO:0046872">
    <property type="term" value="F:metal ion binding"/>
    <property type="evidence" value="ECO:0007669"/>
    <property type="project" value="UniProtKB-KW"/>
</dbReference>
<dbReference type="CDD" id="cd03028">
    <property type="entry name" value="GRX_PICOT_like"/>
    <property type="match status" value="1"/>
</dbReference>
<dbReference type="FunFam" id="3.40.30.10:FF:000005">
    <property type="entry name" value="Glutaredoxin 5"/>
    <property type="match status" value="1"/>
</dbReference>
<dbReference type="Gene3D" id="3.40.30.10">
    <property type="entry name" value="Glutaredoxin"/>
    <property type="match status" value="1"/>
</dbReference>
<dbReference type="InterPro" id="IPR002109">
    <property type="entry name" value="Glutaredoxin"/>
</dbReference>
<dbReference type="InterPro" id="IPR033658">
    <property type="entry name" value="GRX_PICOT-like"/>
</dbReference>
<dbReference type="InterPro" id="IPR004480">
    <property type="entry name" value="Monothiol_GRX-rel"/>
</dbReference>
<dbReference type="InterPro" id="IPR036249">
    <property type="entry name" value="Thioredoxin-like_sf"/>
</dbReference>
<dbReference type="NCBIfam" id="TIGR00365">
    <property type="entry name" value="Grx4 family monothiol glutaredoxin"/>
    <property type="match status" value="1"/>
</dbReference>
<dbReference type="PANTHER" id="PTHR10293">
    <property type="entry name" value="GLUTAREDOXIN FAMILY MEMBER"/>
    <property type="match status" value="1"/>
</dbReference>
<dbReference type="PANTHER" id="PTHR10293:SF16">
    <property type="entry name" value="GLUTAREDOXIN-RELATED PROTEIN 5, MITOCHONDRIAL"/>
    <property type="match status" value="1"/>
</dbReference>
<dbReference type="Pfam" id="PF00462">
    <property type="entry name" value="Glutaredoxin"/>
    <property type="match status" value="1"/>
</dbReference>
<dbReference type="SUPFAM" id="SSF52833">
    <property type="entry name" value="Thioredoxin-like"/>
    <property type="match status" value="1"/>
</dbReference>
<dbReference type="PROSITE" id="PS51354">
    <property type="entry name" value="GLUTAREDOXIN_2"/>
    <property type="match status" value="1"/>
</dbReference>
<evidence type="ECO:0000250" key="1"/>
<evidence type="ECO:0000255" key="2"/>
<evidence type="ECO:0000255" key="3">
    <source>
        <dbReference type="PROSITE-ProRule" id="PRU00686"/>
    </source>
</evidence>
<evidence type="ECO:0000256" key="4">
    <source>
        <dbReference type="SAM" id="MobiDB-lite"/>
    </source>
</evidence>
<evidence type="ECO:0000305" key="5"/>
<gene>
    <name type="primary">GRXS4</name>
    <name type="ordered locus">Os01g0530400</name>
    <name type="ordered locus">LOC_Os01g34620</name>
    <name type="ORF">P0702H08.16-1</name>
</gene>
<protein>
    <recommendedName>
        <fullName>Monothiol glutaredoxin-S4, mitochondrial</fullName>
    </recommendedName>
</protein>
<reference key="1">
    <citation type="journal article" date="2002" name="Nature">
        <title>The genome sequence and structure of rice chromosome 1.</title>
        <authorList>
            <person name="Sasaki T."/>
            <person name="Matsumoto T."/>
            <person name="Yamamoto K."/>
            <person name="Sakata K."/>
            <person name="Baba T."/>
            <person name="Katayose Y."/>
            <person name="Wu J."/>
            <person name="Niimura Y."/>
            <person name="Cheng Z."/>
            <person name="Nagamura Y."/>
            <person name="Antonio B.A."/>
            <person name="Kanamori H."/>
            <person name="Hosokawa S."/>
            <person name="Masukawa M."/>
            <person name="Arikawa K."/>
            <person name="Chiden Y."/>
            <person name="Hayashi M."/>
            <person name="Okamoto M."/>
            <person name="Ando T."/>
            <person name="Aoki H."/>
            <person name="Arita K."/>
            <person name="Hamada M."/>
            <person name="Harada C."/>
            <person name="Hijishita S."/>
            <person name="Honda M."/>
            <person name="Ichikawa Y."/>
            <person name="Idonuma A."/>
            <person name="Iijima M."/>
            <person name="Ikeda M."/>
            <person name="Ikeno M."/>
            <person name="Ito S."/>
            <person name="Ito T."/>
            <person name="Ito Y."/>
            <person name="Ito Y."/>
            <person name="Iwabuchi A."/>
            <person name="Kamiya K."/>
            <person name="Karasawa W."/>
            <person name="Katagiri S."/>
            <person name="Kikuta A."/>
            <person name="Kobayashi N."/>
            <person name="Kono I."/>
            <person name="Machita K."/>
            <person name="Maehara T."/>
            <person name="Mizuno H."/>
            <person name="Mizubayashi T."/>
            <person name="Mukai Y."/>
            <person name="Nagasaki H."/>
            <person name="Nakashima M."/>
            <person name="Nakama Y."/>
            <person name="Nakamichi Y."/>
            <person name="Nakamura M."/>
            <person name="Namiki N."/>
            <person name="Negishi M."/>
            <person name="Ohta I."/>
            <person name="Ono N."/>
            <person name="Saji S."/>
            <person name="Sakai K."/>
            <person name="Shibata M."/>
            <person name="Shimokawa T."/>
            <person name="Shomura A."/>
            <person name="Song J."/>
            <person name="Takazaki Y."/>
            <person name="Terasawa K."/>
            <person name="Tsuji K."/>
            <person name="Waki K."/>
            <person name="Yamagata H."/>
            <person name="Yamane H."/>
            <person name="Yoshiki S."/>
            <person name="Yoshihara R."/>
            <person name="Yukawa K."/>
            <person name="Zhong H."/>
            <person name="Iwama H."/>
            <person name="Endo T."/>
            <person name="Ito H."/>
            <person name="Hahn J.H."/>
            <person name="Kim H.-I."/>
            <person name="Eun M.-Y."/>
            <person name="Yano M."/>
            <person name="Jiang J."/>
            <person name="Gojobori T."/>
        </authorList>
    </citation>
    <scope>NUCLEOTIDE SEQUENCE [LARGE SCALE GENOMIC DNA]</scope>
    <source>
        <strain>cv. Nipponbare</strain>
    </source>
</reference>
<reference key="2">
    <citation type="journal article" date="2005" name="Nature">
        <title>The map-based sequence of the rice genome.</title>
        <authorList>
            <consortium name="International rice genome sequencing project (IRGSP)"/>
        </authorList>
    </citation>
    <scope>NUCLEOTIDE SEQUENCE [LARGE SCALE GENOMIC DNA]</scope>
    <source>
        <strain>cv. Nipponbare</strain>
    </source>
</reference>
<reference key="3">
    <citation type="journal article" date="2008" name="Nucleic Acids Res.">
        <title>The rice annotation project database (RAP-DB): 2008 update.</title>
        <authorList>
            <consortium name="The rice annotation project (RAP)"/>
        </authorList>
    </citation>
    <scope>GENOME REANNOTATION</scope>
    <source>
        <strain>cv. Nipponbare</strain>
    </source>
</reference>
<reference key="4">
    <citation type="journal article" date="2013" name="Rice">
        <title>Improvement of the Oryza sativa Nipponbare reference genome using next generation sequence and optical map data.</title>
        <authorList>
            <person name="Kawahara Y."/>
            <person name="de la Bastide M."/>
            <person name="Hamilton J.P."/>
            <person name="Kanamori H."/>
            <person name="McCombie W.R."/>
            <person name="Ouyang S."/>
            <person name="Schwartz D.C."/>
            <person name="Tanaka T."/>
            <person name="Wu J."/>
            <person name="Zhou S."/>
            <person name="Childs K.L."/>
            <person name="Davidson R.M."/>
            <person name="Lin H."/>
            <person name="Quesada-Ocampo L."/>
            <person name="Vaillancourt B."/>
            <person name="Sakai H."/>
            <person name="Lee S.S."/>
            <person name="Kim J."/>
            <person name="Numa H."/>
            <person name="Itoh T."/>
            <person name="Buell C.R."/>
            <person name="Matsumoto T."/>
        </authorList>
    </citation>
    <scope>GENOME REANNOTATION</scope>
    <source>
        <strain>cv. Nipponbare</strain>
    </source>
</reference>
<reference key="5">
    <citation type="journal article" date="2003" name="Science">
        <title>Collection, mapping, and annotation of over 28,000 cDNA clones from japonica rice.</title>
        <authorList>
            <consortium name="The rice full-length cDNA consortium"/>
        </authorList>
    </citation>
    <scope>NUCLEOTIDE SEQUENCE [LARGE SCALE MRNA]</scope>
    <source>
        <strain>cv. Nipponbare</strain>
    </source>
</reference>
<reference key="6">
    <citation type="journal article" date="2006" name="J. Exp. Bot.">
        <title>Genome-wide analysis of plant glutaredoxin systems.</title>
        <authorList>
            <person name="Rouhier N."/>
            <person name="Couturier J."/>
            <person name="Jacquot J.-P."/>
        </authorList>
    </citation>
    <scope>GENE FAMILY</scope>
</reference>
<comment type="function">
    <text evidence="5">May only reduce GSH-thiol disulfides, but not protein disulfides.</text>
</comment>
<comment type="subcellular location">
    <subcellularLocation>
        <location evidence="5">Mitochondrion</location>
    </subcellularLocation>
</comment>
<comment type="similarity">
    <text evidence="5">Belongs to the glutaredoxin family. CGFS subfamily.</text>
</comment>
<comment type="sequence caution" evidence="5">
    <conflict type="erroneous initiation">
        <sequence resource="EMBL-CDS" id="BAD87472"/>
    </conflict>
</comment>
<accession>Q0JM76</accession>
<accession>B7EV32</accession>
<accession>Q5JM41</accession>
<feature type="transit peptide" description="Mitochondrion" evidence="2">
    <location>
        <begin position="1"/>
        <end position="36"/>
    </location>
</feature>
<feature type="chain" id="PRO_0000271273" description="Monothiol glutaredoxin-S4, mitochondrial">
    <location>
        <begin position="37"/>
        <end position="185"/>
    </location>
</feature>
<feature type="domain" description="Glutaredoxin" evidence="3">
    <location>
        <begin position="77"/>
        <end position="179"/>
    </location>
</feature>
<feature type="region of interest" description="Disordered" evidence="4">
    <location>
        <begin position="37"/>
        <end position="74"/>
    </location>
</feature>
<feature type="compositionally biased region" description="Low complexity" evidence="4">
    <location>
        <begin position="43"/>
        <end position="53"/>
    </location>
</feature>
<feature type="compositionally biased region" description="Polar residues" evidence="4">
    <location>
        <begin position="64"/>
        <end position="74"/>
    </location>
</feature>
<feature type="binding site" evidence="1">
    <location>
        <position position="94"/>
    </location>
    <ligand>
        <name>glutathione</name>
        <dbReference type="ChEBI" id="CHEBI:57925"/>
    </ligand>
</feature>
<feature type="binding site" evidence="2">
    <location>
        <position position="102"/>
    </location>
    <ligand>
        <name>[2Fe-2S] cluster</name>
        <dbReference type="ChEBI" id="CHEBI:190135"/>
        <note>ligand shared between dimeric partners</note>
    </ligand>
</feature>
<feature type="binding site" evidence="2">
    <location>
        <position position="131"/>
    </location>
    <ligand>
        <name>glutathione</name>
        <dbReference type="ChEBI" id="CHEBI:57925"/>
    </ligand>
</feature>
<feature type="binding site" evidence="1">
    <location>
        <position position="143"/>
    </location>
    <ligand>
        <name>glutathione</name>
        <dbReference type="ChEBI" id="CHEBI:57925"/>
    </ligand>
</feature>
<feature type="binding site" evidence="1">
    <location>
        <begin position="156"/>
        <end position="157"/>
    </location>
    <ligand>
        <name>glutathione</name>
        <dbReference type="ChEBI" id="CHEBI:57925"/>
    </ligand>
</feature>
<sequence length="185" mass="20147">MARLMSSALIRGLVRSSCSPTVAAVAQPTIHQFRNYSSGLGGDSTATGDSSSTRVAADPDTHQDFQPTTKSSNMSFDDIVSQDIKENPVLIYMKGYPDAPRCGFSALAVRVLKQYDVPISARDILGDLKLKESVKAHTNWPTFPQIFIKGEFVGGSDIILDMHQKGQLKDVLGDIAQKREQNESS</sequence>
<name>GRXS4_ORYSJ</name>
<keyword id="KW-0001">2Fe-2S</keyword>
<keyword id="KW-0408">Iron</keyword>
<keyword id="KW-0411">Iron-sulfur</keyword>
<keyword id="KW-0479">Metal-binding</keyword>
<keyword id="KW-0496">Mitochondrion</keyword>
<keyword id="KW-0676">Redox-active center</keyword>
<keyword id="KW-1185">Reference proteome</keyword>
<keyword id="KW-0809">Transit peptide</keyword>